<accession>Q43019</accession>
<organism>
    <name type="scientific">Prunus dulcis</name>
    <name type="common">Almond</name>
    <name type="synonym">Amygdalus dulcis</name>
    <dbReference type="NCBI Taxonomy" id="3755"/>
    <lineage>
        <taxon>Eukaryota</taxon>
        <taxon>Viridiplantae</taxon>
        <taxon>Streptophyta</taxon>
        <taxon>Embryophyta</taxon>
        <taxon>Tracheophyta</taxon>
        <taxon>Spermatophyta</taxon>
        <taxon>Magnoliopsida</taxon>
        <taxon>eudicotyledons</taxon>
        <taxon>Gunneridae</taxon>
        <taxon>Pentapetalae</taxon>
        <taxon>rosids</taxon>
        <taxon>fabids</taxon>
        <taxon>Rosales</taxon>
        <taxon>Rosaceae</taxon>
        <taxon>Amygdaloideae</taxon>
        <taxon>Amygdaleae</taxon>
        <taxon>Prunus</taxon>
    </lineage>
</organism>
<proteinExistence type="evidence at transcript level"/>
<dbReference type="EMBL" id="X96716">
    <property type="protein sequence ID" value="CAA65477.1"/>
    <property type="molecule type" value="mRNA"/>
</dbReference>
<dbReference type="RefSeq" id="NP_001391901.1">
    <property type="nucleotide sequence ID" value="NM_001404972.1"/>
</dbReference>
<dbReference type="SMR" id="Q43019"/>
<dbReference type="Allergome" id="754">
    <property type="allergen name" value="Pru du 3"/>
</dbReference>
<dbReference type="GeneID" id="117632836"/>
<dbReference type="GO" id="GO:0008289">
    <property type="term" value="F:lipid binding"/>
    <property type="evidence" value="ECO:0007669"/>
    <property type="project" value="UniProtKB-KW"/>
</dbReference>
<dbReference type="GO" id="GO:0006869">
    <property type="term" value="P:lipid transport"/>
    <property type="evidence" value="ECO:0007669"/>
    <property type="project" value="InterPro"/>
</dbReference>
<dbReference type="CDD" id="cd01960">
    <property type="entry name" value="nsLTP1"/>
    <property type="match status" value="1"/>
</dbReference>
<dbReference type="FunFam" id="1.10.110.10:FF:000002">
    <property type="entry name" value="Non-specific lipid-transfer protein"/>
    <property type="match status" value="1"/>
</dbReference>
<dbReference type="Gene3D" id="1.10.110.10">
    <property type="entry name" value="Plant lipid-transfer and hydrophobic proteins"/>
    <property type="match status" value="1"/>
</dbReference>
<dbReference type="InterPro" id="IPR036312">
    <property type="entry name" value="Bifun_inhib/LTP/seed_sf"/>
</dbReference>
<dbReference type="InterPro" id="IPR016140">
    <property type="entry name" value="Bifunc_inhib/LTP/seed_store"/>
</dbReference>
<dbReference type="InterPro" id="IPR000528">
    <property type="entry name" value="Plant_nsLTP"/>
</dbReference>
<dbReference type="PANTHER" id="PTHR33076">
    <property type="entry name" value="NON-SPECIFIC LIPID-TRANSFER PROTEIN 2-RELATED"/>
    <property type="match status" value="1"/>
</dbReference>
<dbReference type="Pfam" id="PF00234">
    <property type="entry name" value="Tryp_alpha_amyl"/>
    <property type="match status" value="1"/>
</dbReference>
<dbReference type="PRINTS" id="PR00382">
    <property type="entry name" value="LIPIDTRNSFER"/>
</dbReference>
<dbReference type="SMART" id="SM00499">
    <property type="entry name" value="AAI"/>
    <property type="match status" value="1"/>
</dbReference>
<dbReference type="SUPFAM" id="SSF47699">
    <property type="entry name" value="Bifunctional inhibitor/lipid-transfer protein/seed storage 2S albumin"/>
    <property type="match status" value="1"/>
</dbReference>
<dbReference type="PROSITE" id="PS00597">
    <property type="entry name" value="PLANT_LTP"/>
    <property type="match status" value="1"/>
</dbReference>
<name>NLTP3_PRUDU</name>
<feature type="signal peptide" evidence="2">
    <location>
        <begin position="1"/>
        <end position="25"/>
    </location>
</feature>
<feature type="chain" id="PRO_0000018403" description="Non-specific lipid-transfer protein 3">
    <location>
        <begin position="26"/>
        <end position="123"/>
    </location>
</feature>
<feature type="disulfide bond" evidence="2">
    <location>
        <begin position="33"/>
        <end position="80"/>
    </location>
</feature>
<feature type="disulfide bond" evidence="2">
    <location>
        <begin position="43"/>
        <end position="57"/>
    </location>
</feature>
<feature type="disulfide bond" evidence="2">
    <location>
        <begin position="58"/>
        <end position="105"/>
    </location>
</feature>
<feature type="disulfide bond" evidence="2">
    <location>
        <begin position="78"/>
        <end position="119"/>
    </location>
</feature>
<reference key="1">
    <citation type="submission" date="1996-05" db="EMBL/GenBank/DDBJ databases">
        <authorList>
            <person name="Esteban M.S."/>
        </authorList>
    </citation>
    <scope>NUCLEOTIDE SEQUENCE [MRNA]</scope>
    <source>
        <strain>cv. Texas</strain>
        <tissue>Flower</tissue>
    </source>
</reference>
<comment type="function">
    <text evidence="1">Plant non-specific lipid-transfer proteins transfer phospholipids as well as galactolipids across membranes. May play a role in wax or cutin deposition in the cell walls of expanding epidermal cells and certain secretory tissues (By similarity).</text>
</comment>
<comment type="similarity">
    <text evidence="3">Belongs to the plant LTP family.</text>
</comment>
<sequence length="123" mass="12474">MASSGQLLKLVCLVAVMCCMAVGGPKAMAAVSCGQVVNNLTPCINYVANGGALNPSCCTGVRSLYSLAQTTADRQSICNCLKQAVNGIPYTNANAGLAAGLPGKCGVNIPYKISPSTDCKSIK</sequence>
<keyword id="KW-1015">Disulfide bond</keyword>
<keyword id="KW-0446">Lipid-binding</keyword>
<keyword id="KW-0732">Signal</keyword>
<keyword id="KW-0813">Transport</keyword>
<protein>
    <recommendedName>
        <fullName>Non-specific lipid-transfer protein 3</fullName>
        <shortName>LTP 3</shortName>
    </recommendedName>
</protein>
<evidence type="ECO:0000250" key="1"/>
<evidence type="ECO:0000255" key="2"/>
<evidence type="ECO:0000305" key="3"/>